<sequence length="313" mass="35651">MLNRSKMLQEIDNLLTSEGYKTSNIYDQGSFDLVARKNLLILLLKTFLNIDSINEANAHEMKQLANIFLASPIIIGEKSRNGILEEGVIYERYDIPAISFETLKNMILYKEYPEILADRGGYFVKVDGNVIKQYREEYSLSLKDLADLAHVSRATMYKYENEIVRANTETAMILEEILNTKVTLDIDLLKPTISEDIEYSNVEGADDLSKLGYGILSTNKSPFDAVAKMKSSKDKSSLLTNVEKNRSEKTLKRMAIPLKDLSMITSSEPVFIINNDKIKDSLGTIPVIKSWELKEFENPSELLKIIRERKDNM</sequence>
<gene>
    <name type="ordered locus">Msm_0453</name>
</gene>
<reference key="1">
    <citation type="journal article" date="2007" name="Proc. Natl. Acad. Sci. U.S.A.">
        <title>Genomic and metabolic adaptations of Methanobrevibacter smithii to the human gut.</title>
        <authorList>
            <person name="Samuel B.S."/>
            <person name="Hansen E.E."/>
            <person name="Manchester J.K."/>
            <person name="Coutinho P.M."/>
            <person name="Henrissat B."/>
            <person name="Fulton R."/>
            <person name="Latreille P."/>
            <person name="Kim K."/>
            <person name="Wilson R.K."/>
            <person name="Gordon J.I."/>
        </authorList>
    </citation>
    <scope>NUCLEOTIDE SEQUENCE [LARGE SCALE GENOMIC DNA]</scope>
    <source>
        <strain>ATCC 35061 / DSM 861 / OCM 144 / PS</strain>
    </source>
</reference>
<feature type="chain" id="PRO_1000129777" description="Putative HTH-type transcriptional regulatory protein Msm_0453">
    <location>
        <begin position="1"/>
        <end position="313"/>
    </location>
</feature>
<feature type="domain" description="HTH cro/C1-type" evidence="1">
    <location>
        <begin position="131"/>
        <end position="189"/>
    </location>
</feature>
<feature type="DNA-binding region" description="H-T-H motif" evidence="1">
    <location>
        <begin position="142"/>
        <end position="161"/>
    </location>
</feature>
<accession>A5UKD0</accession>
<organism>
    <name type="scientific">Methanobrevibacter smithii (strain ATCC 35061 / DSM 861 / OCM 144 / PS)</name>
    <dbReference type="NCBI Taxonomy" id="420247"/>
    <lineage>
        <taxon>Archaea</taxon>
        <taxon>Methanobacteriati</taxon>
        <taxon>Methanobacteriota</taxon>
        <taxon>Methanomada group</taxon>
        <taxon>Methanobacteria</taxon>
        <taxon>Methanobacteriales</taxon>
        <taxon>Methanobacteriaceae</taxon>
        <taxon>Methanobrevibacter</taxon>
    </lineage>
</organism>
<name>Y453_METS3</name>
<evidence type="ECO:0000255" key="1">
    <source>
        <dbReference type="HAMAP-Rule" id="MF_00584"/>
    </source>
</evidence>
<dbReference type="EMBL" id="CP000678">
    <property type="protein sequence ID" value="ABQ86658.1"/>
    <property type="molecule type" value="Genomic_DNA"/>
</dbReference>
<dbReference type="RefSeq" id="WP_011953896.1">
    <property type="nucleotide sequence ID" value="NZ_CP117965.1"/>
</dbReference>
<dbReference type="SMR" id="A5UKD0"/>
<dbReference type="STRING" id="420247.Msm_0453"/>
<dbReference type="EnsemblBacteria" id="ABQ86658">
    <property type="protein sequence ID" value="ABQ86658"/>
    <property type="gene ID" value="Msm_0453"/>
</dbReference>
<dbReference type="KEGG" id="msi:Msm_0453"/>
<dbReference type="PATRIC" id="fig|420247.28.peg.453"/>
<dbReference type="eggNOG" id="arCOG04152">
    <property type="taxonomic scope" value="Archaea"/>
</dbReference>
<dbReference type="HOGENOM" id="CLU_075726_0_0_2"/>
<dbReference type="BioCyc" id="MSMI420247:GHWZ-459-MONOMER"/>
<dbReference type="Proteomes" id="UP000001992">
    <property type="component" value="Chromosome"/>
</dbReference>
<dbReference type="GO" id="GO:0003677">
    <property type="term" value="F:DNA binding"/>
    <property type="evidence" value="ECO:0007669"/>
    <property type="project" value="UniProtKB-KW"/>
</dbReference>
<dbReference type="GO" id="GO:0003700">
    <property type="term" value="F:DNA-binding transcription factor activity"/>
    <property type="evidence" value="ECO:0007669"/>
    <property type="project" value="UniProtKB-UniRule"/>
</dbReference>
<dbReference type="CDD" id="cd00093">
    <property type="entry name" value="HTH_XRE"/>
    <property type="match status" value="1"/>
</dbReference>
<dbReference type="Gene3D" id="1.10.260.40">
    <property type="entry name" value="lambda repressor-like DNA-binding domains"/>
    <property type="match status" value="1"/>
</dbReference>
<dbReference type="HAMAP" id="MF_00584">
    <property type="entry name" value="HTH_type_cro_C1"/>
    <property type="match status" value="1"/>
</dbReference>
<dbReference type="InterPro" id="IPR020886">
    <property type="entry name" value="Arc_TR_HTH"/>
</dbReference>
<dbReference type="InterPro" id="IPR001387">
    <property type="entry name" value="Cro/C1-type_HTH"/>
</dbReference>
<dbReference type="InterPro" id="IPR010982">
    <property type="entry name" value="Lambda_DNA-bd_dom_sf"/>
</dbReference>
<dbReference type="NCBIfam" id="NF003162">
    <property type="entry name" value="PRK04140.1"/>
    <property type="match status" value="1"/>
</dbReference>
<dbReference type="Pfam" id="PF01381">
    <property type="entry name" value="HTH_3"/>
    <property type="match status" value="1"/>
</dbReference>
<dbReference type="SMART" id="SM00530">
    <property type="entry name" value="HTH_XRE"/>
    <property type="match status" value="1"/>
</dbReference>
<dbReference type="SUPFAM" id="SSF47413">
    <property type="entry name" value="lambda repressor-like DNA-binding domains"/>
    <property type="match status" value="1"/>
</dbReference>
<dbReference type="PROSITE" id="PS50943">
    <property type="entry name" value="HTH_CROC1"/>
    <property type="match status" value="1"/>
</dbReference>
<protein>
    <recommendedName>
        <fullName evidence="1">Putative HTH-type transcriptional regulatory protein Msm_0453</fullName>
    </recommendedName>
</protein>
<keyword id="KW-0238">DNA-binding</keyword>
<keyword id="KW-0804">Transcription</keyword>
<keyword id="KW-0805">Transcription regulation</keyword>
<proteinExistence type="inferred from homology"/>